<reference evidence="5" key="1">
    <citation type="journal article" date="2004" name="J. Immunol.">
        <title>Unprecedented multiplicity of Ig transmembrane and secretory mRNA forms in the cartilaginous fish.</title>
        <authorList>
            <person name="Rumfelt L.L."/>
            <person name="Diaz M."/>
            <person name="Lohr R.L."/>
            <person name="Mochon E."/>
            <person name="Flajnik M.F."/>
        </authorList>
    </citation>
    <scope>NUCLEOTIDE SEQUENCE</scope>
    <scope>TISSUE SPECIFICITY</scope>
    <source>
        <tissue evidence="3">Spleen</tissue>
    </source>
</reference>
<comment type="subcellular location">
    <subcellularLocation>
        <location evidence="5">Membrane</location>
        <topology evidence="5">Multi-pass membrane protein</topology>
    </subcellularLocation>
</comment>
<comment type="tissue specificity">
    <text evidence="3">Expressed in the spleen, pancreas, peripheral blood lymphocytes and at low levels in the epigonal organ.</text>
</comment>
<feature type="chain" id="PRO_0000059860" description="IgW transmembrane form Tm1T3/Tm6T3/Tm3C4">
    <location>
        <begin position="1" status="less than"/>
        <end position="53"/>
    </location>
</feature>
<feature type="transmembrane region" description="Helical" evidence="1">
    <location>
        <begin position="29"/>
        <end position="49"/>
    </location>
</feature>
<feature type="region of interest" description="Disordered" evidence="2">
    <location>
        <begin position="1"/>
        <end position="25"/>
    </location>
</feature>
<feature type="compositionally biased region" description="Acidic residues" evidence="2">
    <location>
        <begin position="13"/>
        <end position="24"/>
    </location>
</feature>
<feature type="non-terminal residue" evidence="4">
    <location>
        <position position="1"/>
    </location>
</feature>
<keyword id="KW-1064">Adaptive immunity</keyword>
<keyword id="KW-0391">Immunity</keyword>
<keyword id="KW-1280">Immunoglobulin</keyword>
<keyword id="KW-0472">Membrane</keyword>
<keyword id="KW-0812">Transmembrane</keyword>
<keyword id="KW-1133">Transmembrane helix</keyword>
<proteinExistence type="evidence at transcript level"/>
<accession>P83981</accession>
<accession>P83982</accession>
<accession>P83983</accession>
<name>IGW1_GINCI</name>
<evidence type="ECO:0000255" key="1"/>
<evidence type="ECO:0000256" key="2">
    <source>
        <dbReference type="SAM" id="MobiDB-lite"/>
    </source>
</evidence>
<evidence type="ECO:0000269" key="3">
    <source>
    </source>
</evidence>
<evidence type="ECO:0000303" key="4">
    <source>
    </source>
</evidence>
<evidence type="ECO:0000305" key="5"/>
<protein>
    <recommendedName>
        <fullName>IgW transmembrane form Tm1T3/Tm6T3/Tm3C4</fullName>
    </recommendedName>
</protein>
<dbReference type="SMR" id="P83981"/>
<dbReference type="GO" id="GO:0019814">
    <property type="term" value="C:immunoglobulin complex"/>
    <property type="evidence" value="ECO:0007669"/>
    <property type="project" value="UniProtKB-KW"/>
</dbReference>
<dbReference type="GO" id="GO:0016020">
    <property type="term" value="C:membrane"/>
    <property type="evidence" value="ECO:0007669"/>
    <property type="project" value="UniProtKB-SubCell"/>
</dbReference>
<dbReference type="GO" id="GO:0002250">
    <property type="term" value="P:adaptive immune response"/>
    <property type="evidence" value="ECO:0007669"/>
    <property type="project" value="UniProtKB-KW"/>
</dbReference>
<sequence length="53" mass="5758">VQAVPPDVKGEEGKEEVEDMDGDDNAPTVAAFAILFILSFLYSTFVTVVKVQQ</sequence>
<organism>
    <name type="scientific">Ginglymostoma cirratum</name>
    <name type="common">Nurse shark</name>
    <name type="synonym">Squalus cirratus</name>
    <dbReference type="NCBI Taxonomy" id="7801"/>
    <lineage>
        <taxon>Eukaryota</taxon>
        <taxon>Metazoa</taxon>
        <taxon>Chordata</taxon>
        <taxon>Craniata</taxon>
        <taxon>Vertebrata</taxon>
        <taxon>Chondrichthyes</taxon>
        <taxon>Elasmobranchii</taxon>
        <taxon>Galeomorphii</taxon>
        <taxon>Galeoidea</taxon>
        <taxon>Orectolobiformes</taxon>
        <taxon>Ginglymostomatidae</taxon>
        <taxon>Ginglymostoma</taxon>
    </lineage>
</organism>